<comment type="function">
    <text evidence="4 6">This enzyme scavenges exogenous and endogenous cytidine and 2'-deoxycytidine for UMP synthesis.</text>
</comment>
<comment type="catalytic activity">
    <reaction evidence="4">
        <text>cytidine + H2O + H(+) = uridine + NH4(+)</text>
        <dbReference type="Rhea" id="RHEA:16069"/>
        <dbReference type="ChEBI" id="CHEBI:15377"/>
        <dbReference type="ChEBI" id="CHEBI:15378"/>
        <dbReference type="ChEBI" id="CHEBI:16704"/>
        <dbReference type="ChEBI" id="CHEBI:17562"/>
        <dbReference type="ChEBI" id="CHEBI:28938"/>
        <dbReference type="EC" id="3.5.4.5"/>
    </reaction>
</comment>
<comment type="catalytic activity">
    <reaction evidence="6">
        <text>2'-deoxycytidine + H2O + H(+) = 2'-deoxyuridine + NH4(+)</text>
        <dbReference type="Rhea" id="RHEA:13433"/>
        <dbReference type="ChEBI" id="CHEBI:15377"/>
        <dbReference type="ChEBI" id="CHEBI:15378"/>
        <dbReference type="ChEBI" id="CHEBI:15698"/>
        <dbReference type="ChEBI" id="CHEBI:16450"/>
        <dbReference type="ChEBI" id="CHEBI:28938"/>
        <dbReference type="EC" id="3.5.4.5"/>
    </reaction>
    <physiologicalReaction direction="left-to-right" evidence="8">
        <dbReference type="Rhea" id="RHEA:13434"/>
    </physiologicalReaction>
</comment>
<comment type="cofactor">
    <cofactor>
        <name>Zn(2+)</name>
        <dbReference type="ChEBI" id="CHEBI:29105"/>
    </cofactor>
</comment>
<comment type="subunit">
    <text evidence="3">Homotetramer.</text>
</comment>
<comment type="interaction">
    <interactant intactId="EBI-9250559">
        <id>P32320</id>
    </interactant>
    <interactant intactId="EBI-3922811">
        <id>Q96EY9</id>
        <label>ADAT3</label>
    </interactant>
    <organismsDiffer>false</organismsDiffer>
    <experiments>3</experiments>
</comment>
<comment type="interaction">
    <interactant intactId="EBI-9250559">
        <id>P32320</id>
    </interactant>
    <interactant intactId="EBI-2875665">
        <id>Q96B67</id>
        <label>ARRDC3</label>
    </interactant>
    <organismsDiffer>false</organismsDiffer>
    <experiments>5</experiments>
</comment>
<comment type="interaction">
    <interactant intactId="EBI-9250559">
        <id>P32320</id>
    </interactant>
    <interactant intactId="EBI-9250559">
        <id>P32320</id>
        <label>CDA</label>
    </interactant>
    <organismsDiffer>false</organismsDiffer>
    <experiments>4</experiments>
</comment>
<comment type="interaction">
    <interactant intactId="EBI-9250559">
        <id>P32320</id>
    </interactant>
    <interactant intactId="EBI-742054">
        <id>Q96D03</id>
        <label>DDIT4L</label>
    </interactant>
    <organismsDiffer>false</organismsDiffer>
    <experiments>5</experiments>
</comment>
<comment type="interaction">
    <interactant intactId="EBI-9250559">
        <id>P32320</id>
    </interactant>
    <interactant intactId="EBI-744935">
        <id>Q9BVV2</id>
        <label>FNDC11</label>
    </interactant>
    <organismsDiffer>false</organismsDiffer>
    <experiments>6</experiments>
</comment>
<comment type="interaction">
    <interactant intactId="EBI-9250559">
        <id>P32320</id>
    </interactant>
    <interactant intactId="EBI-11319000">
        <id>O15353</id>
        <label>FOXN1</label>
    </interactant>
    <organismsDiffer>false</organismsDiffer>
    <experiments>3</experiments>
</comment>
<comment type="interaction">
    <interactant intactId="EBI-9250559">
        <id>P32320</id>
    </interactant>
    <interactant intactId="EBI-739467">
        <id>Q9H8Y8</id>
        <label>GORASP2</label>
    </interactant>
    <organismsDiffer>false</organismsDiffer>
    <experiments>3</experiments>
</comment>
<comment type="interaction">
    <interactant intactId="EBI-9250559">
        <id>P32320</id>
    </interactant>
    <interactant intactId="EBI-6509505">
        <id>Q0VD86</id>
        <label>INCA1</label>
    </interactant>
    <organismsDiffer>false</organismsDiffer>
    <experiments>3</experiments>
</comment>
<comment type="interaction">
    <interactant intactId="EBI-9250559">
        <id>P32320</id>
    </interactant>
    <interactant intactId="EBI-12111050">
        <id>Q3LI64</id>
        <label>KRTAP6-1</label>
    </interactant>
    <organismsDiffer>false</organismsDiffer>
    <experiments>3</experiments>
</comment>
<comment type="interaction">
    <interactant intactId="EBI-9250559">
        <id>P32320</id>
    </interactant>
    <interactant intactId="EBI-10261141">
        <id>Q8IUC2</id>
        <label>KRTAP8-1</label>
    </interactant>
    <organismsDiffer>false</organismsDiffer>
    <experiments>3</experiments>
</comment>
<comment type="interaction">
    <interactant intactId="EBI-9250559">
        <id>P32320</id>
    </interactant>
    <interactant intactId="EBI-739832">
        <id>Q8TBB1</id>
        <label>LNX1</label>
    </interactant>
    <organismsDiffer>false</organismsDiffer>
    <experiments>9</experiments>
</comment>
<comment type="interaction">
    <interactant intactId="EBI-9250559">
        <id>P32320</id>
    </interactant>
    <interactant intactId="EBI-741158">
        <id>Q96HA8</id>
        <label>NTAQ1</label>
    </interactant>
    <organismsDiffer>false</organismsDiffer>
    <experiments>9</experiments>
</comment>
<comment type="interaction">
    <interactant intactId="EBI-9250559">
        <id>P32320</id>
    </interactant>
    <interactant intactId="EBI-373552">
        <id>Q96CS7</id>
        <label>PLEKHB2</label>
    </interactant>
    <organismsDiffer>false</organismsDiffer>
    <experiments>6</experiments>
</comment>
<comment type="interaction">
    <interactant intactId="EBI-9250559">
        <id>P32320</id>
    </interactant>
    <interactant intactId="EBI-359352">
        <id>P25786</id>
        <label>PSMA1</label>
    </interactant>
    <organismsDiffer>false</organismsDiffer>
    <experiments>3</experiments>
</comment>
<comment type="interaction">
    <interactant intactId="EBI-9250559">
        <id>P32320</id>
    </interactant>
    <interactant intactId="EBI-10234038">
        <id>P43115-12</id>
        <label>PTGER3</label>
    </interactant>
    <organismsDiffer>false</organismsDiffer>
    <experiments>3</experiments>
</comment>
<comment type="interaction">
    <interactant intactId="EBI-9250559">
        <id>P32320</id>
    </interactant>
    <interactant intactId="EBI-727004">
        <id>O00560</id>
        <label>SDCBP</label>
    </interactant>
    <organismsDiffer>false</organismsDiffer>
    <experiments>6</experiments>
</comment>
<comment type="interaction">
    <interactant intactId="EBI-9250559">
        <id>P32320</id>
    </interactant>
    <interactant intactId="EBI-744471">
        <id>O43167</id>
        <label>ZBTB24</label>
    </interactant>
    <organismsDiffer>false</organismsDiffer>
    <experiments>6</experiments>
</comment>
<comment type="tissue specificity">
    <text>Highly expressed in granulocytes while expression is very low in fibroblasts, chondrocytes, monocytes, and T- as well as B-cell lines.</text>
</comment>
<comment type="similarity">
    <text evidence="7">Belongs to the cytidine and deoxycytidylate deaminase family.</text>
</comment>
<comment type="online information" name="Atlas of Genetics and Cytogenetics in Oncology and Haematology">
    <link uri="https://atlasgeneticsoncology.org/gene/998/CDA"/>
</comment>
<proteinExistence type="evidence at protein level"/>
<protein>
    <recommendedName>
        <fullName evidence="7">Cytidine deaminase</fullName>
        <ecNumber evidence="4 6">3.5.4.5</ecNumber>
    </recommendedName>
    <alternativeName>
        <fullName>Cytidine aminohydrolase</fullName>
    </alternativeName>
</protein>
<name>CDD_HUMAN</name>
<reference key="1">
    <citation type="journal article" date="1994" name="Cancer Res.">
        <title>Human cytidine deaminase: purification of enzyme, cloning, and expression of its complementary DNA.</title>
        <authorList>
            <person name="Laliberte J."/>
            <person name="Momparler R.L."/>
        </authorList>
    </citation>
    <scope>NUCLEOTIDE SEQUENCE [MRNA]</scope>
    <scope>CATALYTIC ACTIVITY</scope>
    <scope>FUNCTION</scope>
    <source>
        <tissue>Liver</tissue>
    </source>
</reference>
<reference key="2">
    <citation type="journal article" date="1998" name="Biochim. Biophys. Acta">
        <title>Isolation and characterization of the gene coding for human cytidine deaminase.</title>
        <authorList>
            <person name="Demontis S."/>
            <person name="Terao M."/>
            <person name="Brivio M."/>
            <person name="Zanotta S."/>
            <person name="Bruschi M."/>
            <person name="Garattini E."/>
        </authorList>
    </citation>
    <scope>NUCLEOTIDE SEQUENCE [GENOMIC DNA]</scope>
</reference>
<reference key="3">
    <citation type="journal article" date="1998" name="Blood">
        <title>Growth inhibition of granulocyte-macrophage colony forming cells by human cytidine deaminase requires the catalytic function of the protein.</title>
        <authorList>
            <person name="Gran C."/>
            <person name="Boyum A."/>
            <person name="Johansen R.F."/>
            <person name="Lovhaug D."/>
            <person name="Seeberg E.C."/>
        </authorList>
    </citation>
    <scope>NUCLEOTIDE SEQUENCE [MRNA]</scope>
    <scope>FUNCTION</scope>
    <scope>CATALYTIC ACTIVITY</scope>
    <source>
        <tissue>Blood</tissue>
    </source>
</reference>
<reference key="4">
    <citation type="journal article" date="2006" name="Nature">
        <title>The DNA sequence and biological annotation of human chromosome 1.</title>
        <authorList>
            <person name="Gregory S.G."/>
            <person name="Barlow K.F."/>
            <person name="McLay K.E."/>
            <person name="Kaul R."/>
            <person name="Swarbreck D."/>
            <person name="Dunham A."/>
            <person name="Scott C.E."/>
            <person name="Howe K.L."/>
            <person name="Woodfine K."/>
            <person name="Spencer C.C.A."/>
            <person name="Jones M.C."/>
            <person name="Gillson C."/>
            <person name="Searle S."/>
            <person name="Zhou Y."/>
            <person name="Kokocinski F."/>
            <person name="McDonald L."/>
            <person name="Evans R."/>
            <person name="Phillips K."/>
            <person name="Atkinson A."/>
            <person name="Cooper R."/>
            <person name="Jones C."/>
            <person name="Hall R.E."/>
            <person name="Andrews T.D."/>
            <person name="Lloyd C."/>
            <person name="Ainscough R."/>
            <person name="Almeida J.P."/>
            <person name="Ambrose K.D."/>
            <person name="Anderson F."/>
            <person name="Andrew R.W."/>
            <person name="Ashwell R.I.S."/>
            <person name="Aubin K."/>
            <person name="Babbage A.K."/>
            <person name="Bagguley C.L."/>
            <person name="Bailey J."/>
            <person name="Beasley H."/>
            <person name="Bethel G."/>
            <person name="Bird C.P."/>
            <person name="Bray-Allen S."/>
            <person name="Brown J.Y."/>
            <person name="Brown A.J."/>
            <person name="Buckley D."/>
            <person name="Burton J."/>
            <person name="Bye J."/>
            <person name="Carder C."/>
            <person name="Chapman J.C."/>
            <person name="Clark S.Y."/>
            <person name="Clarke G."/>
            <person name="Clee C."/>
            <person name="Cobley V."/>
            <person name="Collier R.E."/>
            <person name="Corby N."/>
            <person name="Coville G.J."/>
            <person name="Davies J."/>
            <person name="Deadman R."/>
            <person name="Dunn M."/>
            <person name="Earthrowl M."/>
            <person name="Ellington A.G."/>
            <person name="Errington H."/>
            <person name="Frankish A."/>
            <person name="Frankland J."/>
            <person name="French L."/>
            <person name="Garner P."/>
            <person name="Garnett J."/>
            <person name="Gay L."/>
            <person name="Ghori M.R.J."/>
            <person name="Gibson R."/>
            <person name="Gilby L.M."/>
            <person name="Gillett W."/>
            <person name="Glithero R.J."/>
            <person name="Grafham D.V."/>
            <person name="Griffiths C."/>
            <person name="Griffiths-Jones S."/>
            <person name="Grocock R."/>
            <person name="Hammond S."/>
            <person name="Harrison E.S.I."/>
            <person name="Hart E."/>
            <person name="Haugen E."/>
            <person name="Heath P.D."/>
            <person name="Holmes S."/>
            <person name="Holt K."/>
            <person name="Howden P.J."/>
            <person name="Hunt A.R."/>
            <person name="Hunt S.E."/>
            <person name="Hunter G."/>
            <person name="Isherwood J."/>
            <person name="James R."/>
            <person name="Johnson C."/>
            <person name="Johnson D."/>
            <person name="Joy A."/>
            <person name="Kay M."/>
            <person name="Kershaw J.K."/>
            <person name="Kibukawa M."/>
            <person name="Kimberley A.M."/>
            <person name="King A."/>
            <person name="Knights A.J."/>
            <person name="Lad H."/>
            <person name="Laird G."/>
            <person name="Lawlor S."/>
            <person name="Leongamornlert D.A."/>
            <person name="Lloyd D.M."/>
            <person name="Loveland J."/>
            <person name="Lovell J."/>
            <person name="Lush M.J."/>
            <person name="Lyne R."/>
            <person name="Martin S."/>
            <person name="Mashreghi-Mohammadi M."/>
            <person name="Matthews L."/>
            <person name="Matthews N.S.W."/>
            <person name="McLaren S."/>
            <person name="Milne S."/>
            <person name="Mistry S."/>
            <person name="Moore M.J.F."/>
            <person name="Nickerson T."/>
            <person name="O'Dell C.N."/>
            <person name="Oliver K."/>
            <person name="Palmeiri A."/>
            <person name="Palmer S.A."/>
            <person name="Parker A."/>
            <person name="Patel D."/>
            <person name="Pearce A.V."/>
            <person name="Peck A.I."/>
            <person name="Pelan S."/>
            <person name="Phelps K."/>
            <person name="Phillimore B.J."/>
            <person name="Plumb R."/>
            <person name="Rajan J."/>
            <person name="Raymond C."/>
            <person name="Rouse G."/>
            <person name="Saenphimmachak C."/>
            <person name="Sehra H.K."/>
            <person name="Sheridan E."/>
            <person name="Shownkeen R."/>
            <person name="Sims S."/>
            <person name="Skuce C.D."/>
            <person name="Smith M."/>
            <person name="Steward C."/>
            <person name="Subramanian S."/>
            <person name="Sycamore N."/>
            <person name="Tracey A."/>
            <person name="Tromans A."/>
            <person name="Van Helmond Z."/>
            <person name="Wall M."/>
            <person name="Wallis J.M."/>
            <person name="White S."/>
            <person name="Whitehead S.L."/>
            <person name="Wilkinson J.E."/>
            <person name="Willey D.L."/>
            <person name="Williams H."/>
            <person name="Wilming L."/>
            <person name="Wray P.W."/>
            <person name="Wu Z."/>
            <person name="Coulson A."/>
            <person name="Vaudin M."/>
            <person name="Sulston J.E."/>
            <person name="Durbin R.M."/>
            <person name="Hubbard T."/>
            <person name="Wooster R."/>
            <person name="Dunham I."/>
            <person name="Carter N.P."/>
            <person name="McVean G."/>
            <person name="Ross M.T."/>
            <person name="Harrow J."/>
            <person name="Olson M.V."/>
            <person name="Beck S."/>
            <person name="Rogers J."/>
            <person name="Bentley D.R."/>
        </authorList>
    </citation>
    <scope>NUCLEOTIDE SEQUENCE [LARGE SCALE GENOMIC DNA]</scope>
</reference>
<reference key="5">
    <citation type="journal article" date="2004" name="Genome Res.">
        <title>The status, quality, and expansion of the NIH full-length cDNA project: the Mammalian Gene Collection (MGC).</title>
        <authorList>
            <consortium name="The MGC Project Team"/>
        </authorList>
    </citation>
    <scope>NUCLEOTIDE SEQUENCE [LARGE SCALE MRNA]</scope>
    <scope>VARIANT GLN-27</scope>
    <source>
        <tissue>Liver</tissue>
    </source>
</reference>
<reference key="6">
    <citation type="journal article" date="1993" name="Biochem. Biophys. Res. Commun.">
        <title>Cloning of a functional cDNA for human cytidine deaminase (CDD) and its use as a marker of monocyte/macrophage differentiation.</title>
        <authorList>
            <person name="Kuhn K."/>
            <person name="Bertling W.M."/>
            <person name="Emmrich F."/>
        </authorList>
    </citation>
    <scope>NUCLEOTIDE SEQUENCE [MRNA] OF 2-146</scope>
    <scope>VARIANT GLN-27</scope>
</reference>
<reference key="7">
    <citation type="journal article" date="2005" name="J. Med. Chem.">
        <title>Structure of human cytidine deaminase bound to a potent inhibitor.</title>
        <authorList>
            <person name="Chung S.J."/>
            <person name="Fromme J.C."/>
            <person name="Verdine G.L."/>
        </authorList>
    </citation>
    <scope>X-RAY CRYSTALLOGRAPHY (2.4 ANGSTROMS) OF 7-146 IN COMPLEX WITH SUBSTRATE ANALOG AND ZINC IONS</scope>
    <scope>SUBUNIT</scope>
</reference>
<evidence type="ECO:0000255" key="1">
    <source>
        <dbReference type="PROSITE-ProRule" id="PRU01083"/>
    </source>
</evidence>
<evidence type="ECO:0000269" key="2">
    <source>
    </source>
</evidence>
<evidence type="ECO:0000269" key="3">
    <source>
    </source>
</evidence>
<evidence type="ECO:0000269" key="4">
    <source>
    </source>
</evidence>
<evidence type="ECO:0000269" key="5">
    <source>
    </source>
</evidence>
<evidence type="ECO:0000269" key="6">
    <source>
    </source>
</evidence>
<evidence type="ECO:0000305" key="7"/>
<evidence type="ECO:0000305" key="8">
    <source>
    </source>
</evidence>
<evidence type="ECO:0000312" key="9">
    <source>
        <dbReference type="HGNC" id="HGNC:1712"/>
    </source>
</evidence>
<evidence type="ECO:0007829" key="10">
    <source>
        <dbReference type="PDB" id="1MQ0"/>
    </source>
</evidence>
<sequence length="146" mass="16185">MAQKRPACTLKPECVQQLLVCSQEAKKSAYCPYSHFPVGAALLTQEGRIFKGCNIENACYPLGICAERTAIQKAVSEGYKDFRAIAIASDMQDDFISPCGACRQVMREFGTNWPVYMTKPDGTYIVMTVQELLPSSFGPEDLQKTQ</sequence>
<organism>
    <name type="scientific">Homo sapiens</name>
    <name type="common">Human</name>
    <dbReference type="NCBI Taxonomy" id="9606"/>
    <lineage>
        <taxon>Eukaryota</taxon>
        <taxon>Metazoa</taxon>
        <taxon>Chordata</taxon>
        <taxon>Craniata</taxon>
        <taxon>Vertebrata</taxon>
        <taxon>Euteleostomi</taxon>
        <taxon>Mammalia</taxon>
        <taxon>Eutheria</taxon>
        <taxon>Euarchontoglires</taxon>
        <taxon>Primates</taxon>
        <taxon>Haplorrhini</taxon>
        <taxon>Catarrhini</taxon>
        <taxon>Hominidae</taxon>
        <taxon>Homo</taxon>
    </lineage>
</organism>
<keyword id="KW-0002">3D-structure</keyword>
<keyword id="KW-0378">Hydrolase</keyword>
<keyword id="KW-0479">Metal-binding</keyword>
<keyword id="KW-1267">Proteomics identification</keyword>
<keyword id="KW-1185">Reference proteome</keyword>
<keyword id="KW-0862">Zinc</keyword>
<feature type="chain" id="PRO_0000171682" description="Cytidine deaminase">
    <location>
        <begin position="1"/>
        <end position="146"/>
    </location>
</feature>
<feature type="domain" description="CMP/dCMP-type deaminase" evidence="1">
    <location>
        <begin position="13"/>
        <end position="140"/>
    </location>
</feature>
<feature type="active site" description="Proton donor">
    <location>
        <position position="67"/>
    </location>
</feature>
<feature type="binding site">
    <location>
        <begin position="54"/>
        <end position="60"/>
    </location>
    <ligand>
        <name>substrate</name>
    </ligand>
</feature>
<feature type="binding site">
    <location>
        <position position="65"/>
    </location>
    <ligand>
        <name>Zn(2+)</name>
        <dbReference type="ChEBI" id="CHEBI:29105"/>
        <note>catalytic</note>
    </ligand>
</feature>
<feature type="binding site">
    <location>
        <position position="99"/>
    </location>
    <ligand>
        <name>Zn(2+)</name>
        <dbReference type="ChEBI" id="CHEBI:29105"/>
        <note>catalytic</note>
    </ligand>
</feature>
<feature type="binding site">
    <location>
        <position position="102"/>
    </location>
    <ligand>
        <name>Zn(2+)</name>
        <dbReference type="ChEBI" id="CHEBI:29105"/>
        <note>catalytic</note>
    </ligand>
</feature>
<feature type="sequence variant" id="VAR_021559" description="In dbSNP:rs2072671." evidence="2 5">
    <original>K</original>
    <variation>Q</variation>
    <location>
        <position position="27"/>
    </location>
</feature>
<feature type="helix" evidence="10">
    <location>
        <begin position="15"/>
        <end position="25"/>
    </location>
</feature>
<feature type="helix" evidence="10">
    <location>
        <begin position="26"/>
        <end position="28"/>
    </location>
</feature>
<feature type="turn" evidence="10">
    <location>
        <begin position="32"/>
        <end position="34"/>
    </location>
</feature>
<feature type="strand" evidence="10">
    <location>
        <begin position="38"/>
        <end position="43"/>
    </location>
</feature>
<feature type="strand" evidence="10">
    <location>
        <begin position="49"/>
        <end position="53"/>
    </location>
</feature>
<feature type="helix" evidence="10">
    <location>
        <begin position="60"/>
        <end position="62"/>
    </location>
</feature>
<feature type="helix" evidence="10">
    <location>
        <begin position="66"/>
        <end position="76"/>
    </location>
</feature>
<feature type="strand" evidence="10">
    <location>
        <begin position="83"/>
        <end position="90"/>
    </location>
</feature>
<feature type="helix" evidence="10">
    <location>
        <begin position="100"/>
        <end position="107"/>
    </location>
</feature>
<feature type="strand" evidence="10">
    <location>
        <begin position="111"/>
        <end position="118"/>
    </location>
</feature>
<feature type="strand" evidence="10">
    <location>
        <begin position="124"/>
        <end position="128"/>
    </location>
</feature>
<feature type="helix" evidence="10">
    <location>
        <begin position="129"/>
        <end position="132"/>
    </location>
</feature>
<feature type="helix" evidence="10">
    <location>
        <begin position="139"/>
        <end position="141"/>
    </location>
</feature>
<dbReference type="EC" id="3.5.4.5" evidence="4 6"/>
<dbReference type="EMBL" id="L27943">
    <property type="protein sequence ID" value="AAA57254.1"/>
    <property type="molecule type" value="mRNA"/>
</dbReference>
<dbReference type="EMBL" id="AF061658">
    <property type="protein sequence ID" value="AAD15828.1"/>
    <property type="molecule type" value="Genomic_DNA"/>
</dbReference>
<dbReference type="EMBL" id="AF061655">
    <property type="protein sequence ID" value="AAD15828.1"/>
    <property type="status" value="JOINED"/>
    <property type="molecule type" value="Genomic_DNA"/>
</dbReference>
<dbReference type="EMBL" id="AF061656">
    <property type="protein sequence ID" value="AAD15828.1"/>
    <property type="status" value="JOINED"/>
    <property type="molecule type" value="Genomic_DNA"/>
</dbReference>
<dbReference type="EMBL" id="AF061657">
    <property type="protein sequence ID" value="AAD15828.1"/>
    <property type="status" value="JOINED"/>
    <property type="molecule type" value="Genomic_DNA"/>
</dbReference>
<dbReference type="EMBL" id="AJ000474">
    <property type="protein sequence ID" value="CAA04113.1"/>
    <property type="molecule type" value="mRNA"/>
</dbReference>
<dbReference type="EMBL" id="AL391357">
    <property type="status" value="NOT_ANNOTATED_CDS"/>
    <property type="molecule type" value="Genomic_DNA"/>
</dbReference>
<dbReference type="EMBL" id="BC054036">
    <property type="protein sequence ID" value="AAH54036.1"/>
    <property type="molecule type" value="mRNA"/>
</dbReference>
<dbReference type="EMBL" id="S52873">
    <property type="protein sequence ID" value="AAB24946.1"/>
    <property type="molecule type" value="mRNA"/>
</dbReference>
<dbReference type="CCDS" id="CCDS210.1"/>
<dbReference type="PIR" id="I52710">
    <property type="entry name" value="I52710"/>
</dbReference>
<dbReference type="RefSeq" id="NP_001776.1">
    <property type="nucleotide sequence ID" value="NM_001785.3"/>
</dbReference>
<dbReference type="PDB" id="1MQ0">
    <property type="method" value="X-ray"/>
    <property type="resolution" value="2.40 A"/>
    <property type="chains" value="A/B=11-146"/>
</dbReference>
<dbReference type="PDBsum" id="1MQ0"/>
<dbReference type="SMR" id="P32320"/>
<dbReference type="BioGRID" id="107416">
    <property type="interactions" value="53"/>
</dbReference>
<dbReference type="CORUM" id="P32320"/>
<dbReference type="FunCoup" id="P32320">
    <property type="interactions" value="232"/>
</dbReference>
<dbReference type="IntAct" id="P32320">
    <property type="interactions" value="31"/>
</dbReference>
<dbReference type="STRING" id="9606.ENSP00000364212"/>
<dbReference type="BindingDB" id="P32320"/>
<dbReference type="ChEMBL" id="CHEMBL4502"/>
<dbReference type="DrugBank" id="DB03185">
    <property type="generic name" value="1-Beta-Ribofuranosyl-1,3-Diazepinone"/>
</dbReference>
<dbReference type="DrugBank" id="DB00928">
    <property type="generic name" value="Azacitidine"/>
</dbReference>
<dbReference type="DrugBank" id="DB01101">
    <property type="generic name" value="Capecitabine"/>
</dbReference>
<dbReference type="DrugBank" id="DB15694">
    <property type="generic name" value="Cedazuridine"/>
</dbReference>
<dbReference type="DrugBank" id="DB00987">
    <property type="generic name" value="Cytarabine"/>
</dbReference>
<dbReference type="DrugBank" id="DB01262">
    <property type="generic name" value="Decitabine"/>
</dbReference>
<dbReference type="DrugBank" id="DB00441">
    <property type="generic name" value="Gemcitabine"/>
</dbReference>
<dbReference type="DrugBank" id="DB12484">
    <property type="generic name" value="Tetrahydrouridine"/>
</dbReference>
<dbReference type="DrugCentral" id="P32320"/>
<dbReference type="GuidetoPHARMACOLOGY" id="3133"/>
<dbReference type="GlyGen" id="P32320">
    <property type="glycosylation" value="1 site, 1 O-linked glycan (1 site)"/>
</dbReference>
<dbReference type="iPTMnet" id="P32320"/>
<dbReference type="PhosphoSitePlus" id="P32320"/>
<dbReference type="BioMuta" id="CDA"/>
<dbReference type="DMDM" id="1705718"/>
<dbReference type="jPOST" id="P32320"/>
<dbReference type="MassIVE" id="P32320"/>
<dbReference type="PaxDb" id="9606-ENSP00000364212"/>
<dbReference type="PeptideAtlas" id="P32320"/>
<dbReference type="ProteomicsDB" id="54869"/>
<dbReference type="Pumba" id="P32320"/>
<dbReference type="TopDownProteomics" id="P32320"/>
<dbReference type="Antibodypedia" id="29806">
    <property type="antibodies" value="324 antibodies from 30 providers"/>
</dbReference>
<dbReference type="DNASU" id="978"/>
<dbReference type="Ensembl" id="ENST00000375071.4">
    <property type="protein sequence ID" value="ENSP00000364212.3"/>
    <property type="gene ID" value="ENSG00000158825.6"/>
</dbReference>
<dbReference type="GeneID" id="978"/>
<dbReference type="KEGG" id="hsa:978"/>
<dbReference type="MANE-Select" id="ENST00000375071.4">
    <property type="protein sequence ID" value="ENSP00000364212.3"/>
    <property type="RefSeq nucleotide sequence ID" value="NM_001785.3"/>
    <property type="RefSeq protein sequence ID" value="NP_001776.1"/>
</dbReference>
<dbReference type="UCSC" id="uc001bdk.4">
    <property type="organism name" value="human"/>
</dbReference>
<dbReference type="AGR" id="HGNC:1712"/>
<dbReference type="CTD" id="978"/>
<dbReference type="DisGeNET" id="978"/>
<dbReference type="GeneCards" id="CDA"/>
<dbReference type="HGNC" id="HGNC:1712">
    <property type="gene designation" value="CDA"/>
</dbReference>
<dbReference type="HPA" id="ENSG00000158825">
    <property type="expression patterns" value="Tissue enhanced (bone marrow, esophagus, liver)"/>
</dbReference>
<dbReference type="MIM" id="123920">
    <property type="type" value="gene"/>
</dbReference>
<dbReference type="neXtProt" id="NX_P32320"/>
<dbReference type="OpenTargets" id="ENSG00000158825"/>
<dbReference type="PharmGKB" id="PA98"/>
<dbReference type="VEuPathDB" id="HostDB:ENSG00000158825"/>
<dbReference type="eggNOG" id="KOG0833">
    <property type="taxonomic scope" value="Eukaryota"/>
</dbReference>
<dbReference type="GeneTree" id="ENSGT00390000000911"/>
<dbReference type="HOGENOM" id="CLU_097262_1_2_1"/>
<dbReference type="InParanoid" id="P32320"/>
<dbReference type="OMA" id="IEIYFMG"/>
<dbReference type="OrthoDB" id="414540at2759"/>
<dbReference type="PAN-GO" id="P32320">
    <property type="GO annotations" value="4 GO annotations based on evolutionary models"/>
</dbReference>
<dbReference type="PhylomeDB" id="P32320"/>
<dbReference type="TreeFam" id="TF314486"/>
<dbReference type="BioCyc" id="MetaCyc:HS08334-MONOMER"/>
<dbReference type="BRENDA" id="3.5.4.5">
    <property type="organism ID" value="2681"/>
</dbReference>
<dbReference type="PathwayCommons" id="P32320"/>
<dbReference type="Reactome" id="R-HSA-6798695">
    <property type="pathway name" value="Neutrophil degranulation"/>
</dbReference>
<dbReference type="Reactome" id="R-HSA-73614">
    <property type="pathway name" value="Pyrimidine salvage"/>
</dbReference>
<dbReference type="SABIO-RK" id="P32320"/>
<dbReference type="SignaLink" id="P32320"/>
<dbReference type="BioGRID-ORCS" id="978">
    <property type="hits" value="18 hits in 1152 CRISPR screens"/>
</dbReference>
<dbReference type="ChiTaRS" id="CDA">
    <property type="organism name" value="human"/>
</dbReference>
<dbReference type="EvolutionaryTrace" id="P32320"/>
<dbReference type="GeneWiki" id="Cytidine_deaminase"/>
<dbReference type="GenomeRNAi" id="978"/>
<dbReference type="Pharos" id="P32320">
    <property type="development level" value="Tclin"/>
</dbReference>
<dbReference type="PRO" id="PR:P32320"/>
<dbReference type="Proteomes" id="UP000005640">
    <property type="component" value="Chromosome 1"/>
</dbReference>
<dbReference type="RNAct" id="P32320">
    <property type="molecule type" value="protein"/>
</dbReference>
<dbReference type="Bgee" id="ENSG00000158825">
    <property type="expression patterns" value="Expressed in lower esophagus mucosa and 114 other cell types or tissues"/>
</dbReference>
<dbReference type="GO" id="GO:0005829">
    <property type="term" value="C:cytosol"/>
    <property type="evidence" value="ECO:0000314"/>
    <property type="project" value="UniProtKB"/>
</dbReference>
<dbReference type="GO" id="GO:0005576">
    <property type="term" value="C:extracellular region"/>
    <property type="evidence" value="ECO:0000304"/>
    <property type="project" value="Reactome"/>
</dbReference>
<dbReference type="GO" id="GO:1904813">
    <property type="term" value="C:ficolin-1-rich granule lumen"/>
    <property type="evidence" value="ECO:0000304"/>
    <property type="project" value="Reactome"/>
</dbReference>
<dbReference type="GO" id="GO:0034774">
    <property type="term" value="C:secretory granule lumen"/>
    <property type="evidence" value="ECO:0000304"/>
    <property type="project" value="Reactome"/>
</dbReference>
<dbReference type="GO" id="GO:1904724">
    <property type="term" value="C:tertiary granule lumen"/>
    <property type="evidence" value="ECO:0000304"/>
    <property type="project" value="Reactome"/>
</dbReference>
<dbReference type="GO" id="GO:0004126">
    <property type="term" value="F:cytidine deaminase activity"/>
    <property type="evidence" value="ECO:0000314"/>
    <property type="project" value="UniProtKB"/>
</dbReference>
<dbReference type="GO" id="GO:0042802">
    <property type="term" value="F:identical protein binding"/>
    <property type="evidence" value="ECO:0000353"/>
    <property type="project" value="UniProtKB"/>
</dbReference>
<dbReference type="GO" id="GO:0001882">
    <property type="term" value="F:nucleoside binding"/>
    <property type="evidence" value="ECO:0000314"/>
    <property type="project" value="UniProtKB"/>
</dbReference>
<dbReference type="GO" id="GO:0042803">
    <property type="term" value="F:protein homodimerization activity"/>
    <property type="evidence" value="ECO:0000314"/>
    <property type="project" value="UniProtKB"/>
</dbReference>
<dbReference type="GO" id="GO:0008270">
    <property type="term" value="F:zinc ion binding"/>
    <property type="evidence" value="ECO:0000314"/>
    <property type="project" value="UniProtKB"/>
</dbReference>
<dbReference type="GO" id="GO:0007166">
    <property type="term" value="P:cell surface receptor signaling pathway"/>
    <property type="evidence" value="ECO:0000303"/>
    <property type="project" value="UniProtKB"/>
</dbReference>
<dbReference type="GO" id="GO:0071217">
    <property type="term" value="P:cellular response to external biotic stimulus"/>
    <property type="evidence" value="ECO:0007669"/>
    <property type="project" value="Ensembl"/>
</dbReference>
<dbReference type="GO" id="GO:0009972">
    <property type="term" value="P:cytidine deamination"/>
    <property type="evidence" value="ECO:0000314"/>
    <property type="project" value="UniProtKB"/>
</dbReference>
<dbReference type="GO" id="GO:0019858">
    <property type="term" value="P:cytosine metabolic process"/>
    <property type="evidence" value="ECO:0000304"/>
    <property type="project" value="UniProtKB"/>
</dbReference>
<dbReference type="GO" id="GO:0030308">
    <property type="term" value="P:negative regulation of cell growth"/>
    <property type="evidence" value="ECO:0000314"/>
    <property type="project" value="UniProtKB"/>
</dbReference>
<dbReference type="GO" id="GO:0045980">
    <property type="term" value="P:negative regulation of nucleotide metabolic process"/>
    <property type="evidence" value="ECO:0000314"/>
    <property type="project" value="UniProtKB"/>
</dbReference>
<dbReference type="GO" id="GO:0008655">
    <property type="term" value="P:pyrimidine-containing compound salvage"/>
    <property type="evidence" value="ECO:0000303"/>
    <property type="project" value="UniProtKB"/>
</dbReference>
<dbReference type="GO" id="GO:0046898">
    <property type="term" value="P:response to cycloheximide"/>
    <property type="evidence" value="ECO:0007669"/>
    <property type="project" value="Ensembl"/>
</dbReference>
<dbReference type="GO" id="GO:0044206">
    <property type="term" value="P:UMP salvage"/>
    <property type="evidence" value="ECO:0007669"/>
    <property type="project" value="Ensembl"/>
</dbReference>
<dbReference type="CDD" id="cd01283">
    <property type="entry name" value="cytidine_deaminase"/>
    <property type="match status" value="1"/>
</dbReference>
<dbReference type="FunFam" id="3.40.140.10:FF:000008">
    <property type="entry name" value="Cytidine deaminase"/>
    <property type="match status" value="1"/>
</dbReference>
<dbReference type="Gene3D" id="3.40.140.10">
    <property type="entry name" value="Cytidine Deaminase, domain 2"/>
    <property type="match status" value="1"/>
</dbReference>
<dbReference type="InterPro" id="IPR016192">
    <property type="entry name" value="APOBEC/CMP_deaminase_Zn-bd"/>
</dbReference>
<dbReference type="InterPro" id="IPR002125">
    <property type="entry name" value="CMP_dCMP_dom"/>
</dbReference>
<dbReference type="InterPro" id="IPR050202">
    <property type="entry name" value="Cyt/Deoxycyt_deaminase"/>
</dbReference>
<dbReference type="InterPro" id="IPR006262">
    <property type="entry name" value="Cyt_deam_tetra"/>
</dbReference>
<dbReference type="InterPro" id="IPR016193">
    <property type="entry name" value="Cytidine_deaminase-like"/>
</dbReference>
<dbReference type="NCBIfam" id="TIGR01354">
    <property type="entry name" value="cyt_deam_tetra"/>
    <property type="match status" value="1"/>
</dbReference>
<dbReference type="NCBIfam" id="NF004064">
    <property type="entry name" value="PRK05578.1"/>
    <property type="match status" value="1"/>
</dbReference>
<dbReference type="PANTHER" id="PTHR11644">
    <property type="entry name" value="CYTIDINE DEAMINASE"/>
    <property type="match status" value="1"/>
</dbReference>
<dbReference type="PANTHER" id="PTHR11644:SF2">
    <property type="entry name" value="CYTIDINE DEAMINASE"/>
    <property type="match status" value="1"/>
</dbReference>
<dbReference type="Pfam" id="PF00383">
    <property type="entry name" value="dCMP_cyt_deam_1"/>
    <property type="match status" value="1"/>
</dbReference>
<dbReference type="SUPFAM" id="SSF53927">
    <property type="entry name" value="Cytidine deaminase-like"/>
    <property type="match status" value="1"/>
</dbReference>
<dbReference type="PROSITE" id="PS00903">
    <property type="entry name" value="CYT_DCMP_DEAMINASES_1"/>
    <property type="match status" value="1"/>
</dbReference>
<dbReference type="PROSITE" id="PS51747">
    <property type="entry name" value="CYT_DCMP_DEAMINASES_2"/>
    <property type="match status" value="1"/>
</dbReference>
<gene>
    <name evidence="9" type="primary">CDA</name>
    <name type="synonym">CDD</name>
</gene>
<accession>P32320</accession>